<feature type="chain" id="PRO_1000002376" description="Cobyric acid synthase">
    <location>
        <begin position="1"/>
        <end position="506"/>
    </location>
</feature>
<feature type="domain" description="GATase cobBQ-type" evidence="1">
    <location>
        <begin position="251"/>
        <end position="448"/>
    </location>
</feature>
<feature type="active site" description="Nucleophile" evidence="1">
    <location>
        <position position="332"/>
    </location>
</feature>
<feature type="active site" evidence="1">
    <location>
        <position position="440"/>
    </location>
</feature>
<organism>
    <name type="scientific">Salmonella choleraesuis (strain SC-B67)</name>
    <dbReference type="NCBI Taxonomy" id="321314"/>
    <lineage>
        <taxon>Bacteria</taxon>
        <taxon>Pseudomonadati</taxon>
        <taxon>Pseudomonadota</taxon>
        <taxon>Gammaproteobacteria</taxon>
        <taxon>Enterobacterales</taxon>
        <taxon>Enterobacteriaceae</taxon>
        <taxon>Salmonella</taxon>
    </lineage>
</organism>
<keyword id="KW-0169">Cobalamin biosynthesis</keyword>
<keyword id="KW-0315">Glutamine amidotransferase</keyword>
<gene>
    <name evidence="1" type="primary">cobQ</name>
    <name type="ordered locus">SCH_2027</name>
</gene>
<accession>Q57MX8</accession>
<comment type="function">
    <text evidence="1">Catalyzes amidations at positions B, D, E, and G on adenosylcobyrinic A,C-diamide. NH(2) groups are provided by glutamine, and one molecule of ATP is hydrogenolyzed for each amidation.</text>
</comment>
<comment type="pathway">
    <text evidence="1">Cofactor biosynthesis; adenosylcobalamin biosynthesis.</text>
</comment>
<comment type="similarity">
    <text evidence="1">Belongs to the CobB/CobQ family. CobQ subfamily.</text>
</comment>
<reference key="1">
    <citation type="journal article" date="2005" name="Nucleic Acids Res.">
        <title>The genome sequence of Salmonella enterica serovar Choleraesuis, a highly invasive and resistant zoonotic pathogen.</title>
        <authorList>
            <person name="Chiu C.-H."/>
            <person name="Tang P."/>
            <person name="Chu C."/>
            <person name="Hu S."/>
            <person name="Bao Q."/>
            <person name="Yu J."/>
            <person name="Chou Y.-Y."/>
            <person name="Wang H.-S."/>
            <person name="Lee Y.-S."/>
        </authorList>
    </citation>
    <scope>NUCLEOTIDE SEQUENCE [LARGE SCALE GENOMIC DNA]</scope>
    <source>
        <strain>SC-B67</strain>
    </source>
</reference>
<protein>
    <recommendedName>
        <fullName evidence="1">Cobyric acid synthase</fullName>
    </recommendedName>
</protein>
<evidence type="ECO:0000255" key="1">
    <source>
        <dbReference type="HAMAP-Rule" id="MF_00028"/>
    </source>
</evidence>
<proteinExistence type="inferred from homology"/>
<sequence length="506" mass="54985">MTQAVMLQGTASDVGKSVLAAGLCRIFYQDGLRTAPFKSQNMALNSGITSDGKEMGRAQIFQAEAAGITPDVRMNPVLLKPTSDRQAQVVLMGKVATNMDAVSYHDYKPRLREQILAVYNSLAQEYDVIVLEGAGSPAEINLRDRDIVNMGMAEMAQCPVILVADIDRGGVFAAIYGTLALLHKQERDRVKGVIINKFRGDVALLYSGIEQIESLTGVPVLGVMPWLDVDLEDEDGVALQNDKYRGNAPRDITIAIVQLPHISNFTDFNALAAQPDVRIRYIRRPEALTDADLVILPGSKNTLSDLAWLRESGMADAVLQTHRQGVPVMGICGGYQMLGDTIVDEVESGLGTQPGLGLLNTITRFAQDKITTQVNATMSGELPSWLAAAAGLPVRGYEIHMGETVLQEGCCTAMTLQKNGCSVADGAVTADGLAFGTYLHGLFDSDAFTRAVVNGLRARKGLAPWETTFCYAEHKARQFDLLAEAMRQHIDIDKIYTIMQQHQEPV</sequence>
<dbReference type="EMBL" id="AE017220">
    <property type="protein sequence ID" value="AAX65933.1"/>
    <property type="molecule type" value="Genomic_DNA"/>
</dbReference>
<dbReference type="SMR" id="Q57MX8"/>
<dbReference type="KEGG" id="sec:SCH_2027"/>
<dbReference type="HOGENOM" id="CLU_019250_2_2_6"/>
<dbReference type="UniPathway" id="UPA00148"/>
<dbReference type="Proteomes" id="UP000000538">
    <property type="component" value="Chromosome"/>
</dbReference>
<dbReference type="GO" id="GO:0015420">
    <property type="term" value="F:ABC-type vitamin B12 transporter activity"/>
    <property type="evidence" value="ECO:0007669"/>
    <property type="project" value="UniProtKB-UniRule"/>
</dbReference>
<dbReference type="GO" id="GO:0003824">
    <property type="term" value="F:catalytic activity"/>
    <property type="evidence" value="ECO:0007669"/>
    <property type="project" value="InterPro"/>
</dbReference>
<dbReference type="GO" id="GO:0009236">
    <property type="term" value="P:cobalamin biosynthetic process"/>
    <property type="evidence" value="ECO:0007669"/>
    <property type="project" value="UniProtKB-UniRule"/>
</dbReference>
<dbReference type="CDD" id="cd05389">
    <property type="entry name" value="CobQ_N"/>
    <property type="match status" value="1"/>
</dbReference>
<dbReference type="CDD" id="cd01750">
    <property type="entry name" value="GATase1_CobQ"/>
    <property type="match status" value="1"/>
</dbReference>
<dbReference type="Gene3D" id="3.40.50.880">
    <property type="match status" value="1"/>
</dbReference>
<dbReference type="Gene3D" id="3.40.50.300">
    <property type="entry name" value="P-loop containing nucleotide triphosphate hydrolases"/>
    <property type="match status" value="1"/>
</dbReference>
<dbReference type="HAMAP" id="MF_00028">
    <property type="entry name" value="CobQ"/>
    <property type="match status" value="1"/>
</dbReference>
<dbReference type="InterPro" id="IPR029062">
    <property type="entry name" value="Class_I_gatase-like"/>
</dbReference>
<dbReference type="InterPro" id="IPR002586">
    <property type="entry name" value="CobQ/CobB/MinD/ParA_Nub-bd_dom"/>
</dbReference>
<dbReference type="InterPro" id="IPR033949">
    <property type="entry name" value="CobQ_GATase1"/>
</dbReference>
<dbReference type="InterPro" id="IPR047045">
    <property type="entry name" value="CobQ_N"/>
</dbReference>
<dbReference type="InterPro" id="IPR004459">
    <property type="entry name" value="CobQ_synth"/>
</dbReference>
<dbReference type="InterPro" id="IPR011698">
    <property type="entry name" value="GATase_3"/>
</dbReference>
<dbReference type="InterPro" id="IPR027417">
    <property type="entry name" value="P-loop_NTPase"/>
</dbReference>
<dbReference type="NCBIfam" id="TIGR00313">
    <property type="entry name" value="cobQ"/>
    <property type="match status" value="1"/>
</dbReference>
<dbReference type="NCBIfam" id="NF001989">
    <property type="entry name" value="PRK00784.1"/>
    <property type="match status" value="1"/>
</dbReference>
<dbReference type="PANTHER" id="PTHR21343:SF1">
    <property type="entry name" value="COBYRIC ACID SYNTHASE"/>
    <property type="match status" value="1"/>
</dbReference>
<dbReference type="PANTHER" id="PTHR21343">
    <property type="entry name" value="DETHIOBIOTIN SYNTHETASE"/>
    <property type="match status" value="1"/>
</dbReference>
<dbReference type="Pfam" id="PF01656">
    <property type="entry name" value="CbiA"/>
    <property type="match status" value="1"/>
</dbReference>
<dbReference type="Pfam" id="PF07685">
    <property type="entry name" value="GATase_3"/>
    <property type="match status" value="1"/>
</dbReference>
<dbReference type="SUPFAM" id="SSF52317">
    <property type="entry name" value="Class I glutamine amidotransferase-like"/>
    <property type="match status" value="1"/>
</dbReference>
<dbReference type="SUPFAM" id="SSF52540">
    <property type="entry name" value="P-loop containing nucleoside triphosphate hydrolases"/>
    <property type="match status" value="1"/>
</dbReference>
<dbReference type="PROSITE" id="PS51274">
    <property type="entry name" value="GATASE_COBBQ"/>
    <property type="match status" value="1"/>
</dbReference>
<name>COBQ_SALCH</name>